<accession>U5L3X2</accession>
<accession>A0A023UCA3</accession>
<keyword id="KW-0379">Hydroxylation</keyword>
<keyword id="KW-0883">Thioether bond</keyword>
<keyword id="KW-0800">Toxin</keyword>
<reference key="1">
    <citation type="journal article" date="2013" name="Gene">
        <title>Illumina-based de novo transcriptome sequencing and analysis of Amanita exitialis basidiocarps.</title>
        <authorList>
            <person name="Li P."/>
            <person name="Deng W.Q."/>
            <person name="Li T.H."/>
            <person name="Song B."/>
            <person name="Shen Y.H."/>
        </authorList>
    </citation>
    <scope>NUCLEOTIDE SEQUENCE [MRNA]</scope>
    <scope>FUNCTION</scope>
    <scope>TISSUE SPECIFICITY</scope>
</reference>
<reference key="2">
    <citation type="journal article" date="2014" name="Toxicon">
        <title>The molecular diversity of toxin gene families in lethal Amanita mushrooms.</title>
        <authorList>
            <person name="Li P."/>
            <person name="Deng W."/>
            <person name="Li T."/>
        </authorList>
    </citation>
    <scope>NUCLEOTIDE SEQUENCE [GENOMIC DNA]</scope>
    <scope>FUNCTION</scope>
</reference>
<reference key="3">
    <citation type="journal article" date="2002" name="J. Toxicol. Clin. Toxicol.">
        <title>Treatment of amatoxin poisoning: 20-year retrospective analysis.</title>
        <authorList>
            <person name="Enjalbert F."/>
            <person name="Rapior S."/>
            <person name="Nouguier-Soule J."/>
            <person name="Guillon S."/>
            <person name="Amouroux N."/>
            <person name="Cabot C."/>
        </authorList>
    </citation>
    <scope>REVIEW ON TOXICITY</scope>
</reference>
<evidence type="ECO:0000250" key="1">
    <source>
        <dbReference type="UniProtKB" id="A0A067SLB9"/>
    </source>
</evidence>
<evidence type="ECO:0000250" key="2">
    <source>
        <dbReference type="UniProtKB" id="P85421"/>
    </source>
</evidence>
<evidence type="ECO:0000269" key="3">
    <source>
    </source>
</evidence>
<evidence type="ECO:0000303" key="4">
    <source>
    </source>
</evidence>
<evidence type="ECO:0000303" key="5">
    <source>
    </source>
</evidence>
<evidence type="ECO:0000305" key="6"/>
<evidence type="ECO:0000305" key="7">
    <source>
    </source>
</evidence>
<evidence type="ECO:0000305" key="8">
    <source>
    </source>
</evidence>
<gene>
    <name evidence="5" type="primary">AMA</name>
</gene>
<protein>
    <recommendedName>
        <fullName evidence="5">Alpha-amanitin proprotein 2</fullName>
    </recommendedName>
    <component>
        <recommendedName>
            <fullName evidence="5">Alpha-amanitin</fullName>
        </recommendedName>
        <alternativeName>
            <fullName evidence="5">Amatoxin</fullName>
        </alternativeName>
        <alternativeName>
            <fullName evidence="2">Gamma-amanitin</fullName>
        </alternativeName>
    </component>
</protein>
<feature type="propeptide" id="PRO_0000443570" evidence="7">
    <location>
        <begin position="1"/>
        <end position="10"/>
    </location>
</feature>
<feature type="peptide" id="PRO_0000443571" description="Alpha-amanitin" evidence="7">
    <location>
        <begin position="11"/>
        <end position="18"/>
    </location>
</feature>
<feature type="propeptide" id="PRO_0000443572" evidence="7">
    <location>
        <begin position="19"/>
        <end position="33"/>
    </location>
</feature>
<feature type="modified residue" description="(3R,4R)-4,5-dihydroxyisoleucine; in form alpha-amanitin" evidence="2">
    <location>
        <position position="11"/>
    </location>
</feature>
<feature type="modified residue" description="(3R,4S)-4-hydroxyisoleucine; in form gamma-amanitin" evidence="2">
    <location>
        <position position="11"/>
    </location>
</feature>
<feature type="modified residue" description="4-hydroxyproline" evidence="2">
    <location>
        <position position="18"/>
    </location>
</feature>
<feature type="cross-link" description="Cyclopeptide (Ile-Pro)" evidence="2">
    <location>
        <begin position="11"/>
        <end position="18"/>
    </location>
</feature>
<feature type="cross-link" description="2'-cysteinyl-6'-hydroxytryptophan sulfoxide (Trp-Cys)" evidence="2">
    <location>
        <begin position="12"/>
        <end position="16"/>
    </location>
</feature>
<organism>
    <name type="scientific">Amanita exitialis</name>
    <name type="common">Guangzhou destroying angel</name>
    <dbReference type="NCBI Taxonomy" id="262245"/>
    <lineage>
        <taxon>Eukaryota</taxon>
        <taxon>Fungi</taxon>
        <taxon>Dikarya</taxon>
        <taxon>Basidiomycota</taxon>
        <taxon>Agaricomycotina</taxon>
        <taxon>Agaricomycetes</taxon>
        <taxon>Agaricomycetidae</taxon>
        <taxon>Agaricales</taxon>
        <taxon>Pluteineae</taxon>
        <taxon>Amanitaceae</taxon>
        <taxon>Amanita</taxon>
    </lineage>
</organism>
<sequence length="33" mass="3462">MSDINATRLPIWGIGCNPCVGDDVTSVLTRGEA</sequence>
<dbReference type="EMBL" id="KF387495">
    <property type="protein sequence ID" value="AGW83719.1"/>
    <property type="molecule type" value="mRNA"/>
</dbReference>
<dbReference type="EMBL" id="KF552093">
    <property type="protein sequence ID" value="AHB18721.1"/>
    <property type="molecule type" value="Genomic_DNA"/>
</dbReference>
<dbReference type="EMBL" id="KF813063">
    <property type="protein sequence ID" value="AIS72327.1"/>
    <property type="molecule type" value="Genomic_DNA"/>
</dbReference>
<dbReference type="EMBL" id="KC778582">
    <property type="protein sequence ID" value="AGO98238.1"/>
    <property type="molecule type" value="Genomic_DNA"/>
</dbReference>
<dbReference type="EMBL" id="KC778583">
    <property type="protein sequence ID" value="AGO98239.1"/>
    <property type="molecule type" value="Genomic_DNA"/>
</dbReference>
<dbReference type="EMBL" id="KC778584">
    <property type="protein sequence ID" value="AGO98240.1"/>
    <property type="molecule type" value="Genomic_DNA"/>
</dbReference>
<dbReference type="EMBL" id="KC778585">
    <property type="protein sequence ID" value="AGO98241.1"/>
    <property type="molecule type" value="Genomic_DNA"/>
</dbReference>
<dbReference type="EMBL" id="KF546278">
    <property type="protein sequence ID" value="AHX98302.1"/>
    <property type="molecule type" value="Genomic_DNA"/>
</dbReference>
<dbReference type="EMBL" id="KF546279">
    <property type="protein sequence ID" value="AHX98303.1"/>
    <property type="molecule type" value="Genomic_DNA"/>
</dbReference>
<dbReference type="EMBL" id="KF546280">
    <property type="protein sequence ID" value="AHX98304.1"/>
    <property type="molecule type" value="Genomic_DNA"/>
</dbReference>
<dbReference type="GO" id="GO:0090729">
    <property type="term" value="F:toxin activity"/>
    <property type="evidence" value="ECO:0007669"/>
    <property type="project" value="UniProtKB-KW"/>
</dbReference>
<dbReference type="InterPro" id="IPR027582">
    <property type="entry name" value="Amanitin/phalloidin"/>
</dbReference>
<dbReference type="NCBIfam" id="TIGR04309">
    <property type="entry name" value="amanitin"/>
    <property type="match status" value="1"/>
</dbReference>
<dbReference type="Pfam" id="PF24112">
    <property type="entry name" value="Amanitin"/>
    <property type="match status" value="1"/>
</dbReference>
<comment type="function">
    <text evidence="7 8">Major toxin belonging to the bicyclic octapeptides amatoxins that acts by binding non-competitively to RNA polymerase II and greatly slowing the elongation of transcripts from target promoters (PubMed:24050899, PubMed:24613547).</text>
</comment>
<comment type="tissue specificity">
    <text evidence="3">Expressed in basidiocarps (PubMed:24050899).</text>
</comment>
<comment type="PTM">
    <text evidence="1 7 8">Processed by the macrocyclase-peptidase enzyme POPB to yield a toxic cyclic octapeptide (PubMed:24050899, PubMed:24613547). POPB first removes 10 residues from the N-terminus (By similarity). Conformational trapping of the remaining peptide forces the enzyme to release this intermediate rather than proceed to macrocyclization (By similarity). The enzyme rebinds the remaining peptide in a different conformation and catalyzes macrocyclization of the N-terminal 8 residues (By similarity).</text>
</comment>
<comment type="miscellaneous">
    <text evidence="4">The typical symptoms of amatoxin poisoning are gastro-intestinal distress beginning 6-12 hours after ingestion, a remission phase lasting 12-24 hours, and progressive loss of liver function culminating in death within 3-5 days (PubMed:12475187). One of the few effective treatments is liver transplantation (PubMed:12475187).</text>
</comment>
<comment type="similarity">
    <text evidence="6">Belongs to the MSDIN fungal toxin family.</text>
</comment>
<proteinExistence type="evidence at transcript level"/>
<name>AAMA2_AMAEX</name>